<sequence>MARYRRHSRSRSRSRYRRRRRRRSRHRNRRRTYRRSRRHSRRRRGRRRGYSRRRYSRRGRRRY</sequence>
<feature type="chain" id="PRO_0000191522" description="Sperm protamine P1">
    <location>
        <begin position="1"/>
        <end position="63"/>
    </location>
</feature>
<feature type="region of interest" description="Disordered" evidence="1">
    <location>
        <begin position="1"/>
        <end position="63"/>
    </location>
</feature>
<reference key="1">
    <citation type="journal article" date="1995" name="Proc. R. Soc. B">
        <title>Molecular phylogeny and evolution of marsupial protamine P1 genes.</title>
        <authorList>
            <person name="Retief J.D."/>
            <person name="Krajewski C."/>
            <person name="Westerman M."/>
            <person name="Winkfein R.J."/>
            <person name="Dixon G.H."/>
        </authorList>
    </citation>
    <scope>NUCLEOTIDE SEQUENCE [GENOMIC DNA]</scope>
    <source>
        <tissue>Sperm</tissue>
    </source>
</reference>
<evidence type="ECO:0000256" key="1">
    <source>
        <dbReference type="SAM" id="MobiDB-lite"/>
    </source>
</evidence>
<evidence type="ECO:0000305" key="2"/>
<proteinExistence type="evidence at transcript level"/>
<comment type="function">
    <text>Protamines substitute for histones in the chromatin of sperm during the haploid phase of spermatogenesis. They compact sperm DNA into a highly condensed, stable and inactive complex.</text>
</comment>
<comment type="subcellular location">
    <subcellularLocation>
        <location>Nucleus</location>
    </subcellularLocation>
    <subcellularLocation>
        <location>Chromosome</location>
    </subcellularLocation>
</comment>
<comment type="tissue specificity">
    <text>Testis.</text>
</comment>
<comment type="similarity">
    <text evidence="2">Belongs to the protamine P1 family.</text>
</comment>
<protein>
    <recommendedName>
        <fullName>Sperm protamine P1</fullName>
    </recommendedName>
</protein>
<organism>
    <name type="scientific">Parantechinus apicalis</name>
    <name type="common">Dibbler</name>
    <dbReference type="NCBI Taxonomy" id="9291"/>
    <lineage>
        <taxon>Eukaryota</taxon>
        <taxon>Metazoa</taxon>
        <taxon>Chordata</taxon>
        <taxon>Craniata</taxon>
        <taxon>Vertebrata</taxon>
        <taxon>Euteleostomi</taxon>
        <taxon>Mammalia</taxon>
        <taxon>Metatheria</taxon>
        <taxon>Dasyuromorphia</taxon>
        <taxon>Dasyuridae</taxon>
        <taxon>Parantechinus</taxon>
    </lineage>
</organism>
<dbReference type="EMBL" id="L35326">
    <property type="protein sequence ID" value="AAA74607.1"/>
    <property type="molecule type" value="Genomic_DNA"/>
</dbReference>
<dbReference type="GO" id="GO:0000786">
    <property type="term" value="C:nucleosome"/>
    <property type="evidence" value="ECO:0007669"/>
    <property type="project" value="UniProtKB-KW"/>
</dbReference>
<dbReference type="GO" id="GO:0005634">
    <property type="term" value="C:nucleus"/>
    <property type="evidence" value="ECO:0007669"/>
    <property type="project" value="UniProtKB-SubCell"/>
</dbReference>
<dbReference type="GO" id="GO:0003677">
    <property type="term" value="F:DNA binding"/>
    <property type="evidence" value="ECO:0007669"/>
    <property type="project" value="UniProtKB-KW"/>
</dbReference>
<dbReference type="GO" id="GO:0030261">
    <property type="term" value="P:chromosome condensation"/>
    <property type="evidence" value="ECO:0007669"/>
    <property type="project" value="UniProtKB-KW"/>
</dbReference>
<dbReference type="GO" id="GO:0035092">
    <property type="term" value="P:sperm DNA condensation"/>
    <property type="evidence" value="ECO:0007669"/>
    <property type="project" value="InterPro"/>
</dbReference>
<dbReference type="InterPro" id="IPR000221">
    <property type="entry name" value="Protamine_P1"/>
</dbReference>
<dbReference type="PROSITE" id="PS00048">
    <property type="entry name" value="PROTAMINE_P1"/>
    <property type="match status" value="1"/>
</dbReference>
<accession>P67831</accession>
<accession>P42134</accession>
<accession>P42144</accession>
<accession>P42149</accession>
<name>HSP1_PARAP</name>
<keyword id="KW-0158">Chromosome</keyword>
<keyword id="KW-0217">Developmental protein</keyword>
<keyword id="KW-0221">Differentiation</keyword>
<keyword id="KW-0226">DNA condensation</keyword>
<keyword id="KW-0238">DNA-binding</keyword>
<keyword id="KW-0544">Nucleosome core</keyword>
<keyword id="KW-0539">Nucleus</keyword>
<keyword id="KW-0744">Spermatogenesis</keyword>
<gene>
    <name type="primary">PRM1</name>
</gene>